<keyword id="KW-0025">Alternative splicing</keyword>
<keyword id="KW-0444">Lipid biosynthesis</keyword>
<keyword id="KW-0443">Lipid metabolism</keyword>
<keyword id="KW-0460">Magnesium</keyword>
<keyword id="KW-0464">Manganese</keyword>
<keyword id="KW-0472">Membrane</keyword>
<keyword id="KW-0479">Metal-binding</keyword>
<keyword id="KW-0594">Phospholipid biosynthesis</keyword>
<keyword id="KW-1208">Phospholipid metabolism</keyword>
<keyword id="KW-1185">Reference proteome</keyword>
<keyword id="KW-0808">Transferase</keyword>
<keyword id="KW-0812">Transmembrane</keyword>
<keyword id="KW-1133">Transmembrane helix</keyword>
<organism>
    <name type="scientific">Arabidopsis thaliana</name>
    <name type="common">Mouse-ear cress</name>
    <dbReference type="NCBI Taxonomy" id="3702"/>
    <lineage>
        <taxon>Eukaryota</taxon>
        <taxon>Viridiplantae</taxon>
        <taxon>Streptophyta</taxon>
        <taxon>Embryophyta</taxon>
        <taxon>Tracheophyta</taxon>
        <taxon>Spermatophyta</taxon>
        <taxon>Magnoliopsida</taxon>
        <taxon>eudicotyledons</taxon>
        <taxon>Gunneridae</taxon>
        <taxon>Pentapetalae</taxon>
        <taxon>rosids</taxon>
        <taxon>malvids</taxon>
        <taxon>Brassicales</taxon>
        <taxon>Brassicaceae</taxon>
        <taxon>Camelineae</taxon>
        <taxon>Arabidopsis</taxon>
    </lineage>
</organism>
<dbReference type="EC" id="2.7.8.1"/>
<dbReference type="EC" id="2.7.8.2"/>
<dbReference type="EMBL" id="AF091844">
    <property type="protein sequence ID" value="AAC61769.1"/>
    <property type="molecule type" value="mRNA"/>
</dbReference>
<dbReference type="EMBL" id="AB025639">
    <property type="status" value="NOT_ANNOTATED_CDS"/>
    <property type="molecule type" value="Genomic_DNA"/>
</dbReference>
<dbReference type="EMBL" id="AP001313">
    <property type="status" value="NOT_ANNOTATED_CDS"/>
    <property type="molecule type" value="Genomic_DNA"/>
</dbReference>
<dbReference type="EMBL" id="CP002686">
    <property type="protein sequence ID" value="AEE77035.1"/>
    <property type="molecule type" value="Genomic_DNA"/>
</dbReference>
<dbReference type="EMBL" id="CP002686">
    <property type="protein sequence ID" value="AEE77036.1"/>
    <property type="molecule type" value="Genomic_DNA"/>
</dbReference>
<dbReference type="EMBL" id="CP002686">
    <property type="protein sequence ID" value="AEE77038.1"/>
    <property type="molecule type" value="Genomic_DNA"/>
</dbReference>
<dbReference type="EMBL" id="AF360151">
    <property type="protein sequence ID" value="AAK25861.1"/>
    <property type="molecule type" value="mRNA"/>
</dbReference>
<dbReference type="EMBL" id="AY054269">
    <property type="protein sequence ID" value="AAL06928.1"/>
    <property type="molecule type" value="mRNA"/>
</dbReference>
<dbReference type="EMBL" id="AY142609">
    <property type="protein sequence ID" value="AAN13178.1"/>
    <property type="molecule type" value="mRNA"/>
</dbReference>
<dbReference type="RefSeq" id="NP_001030767.1">
    <molecule id="O82568-1"/>
    <property type="nucleotide sequence ID" value="NM_001035690.1"/>
</dbReference>
<dbReference type="RefSeq" id="NP_189186.1">
    <molecule id="O82568-1"/>
    <property type="nucleotide sequence ID" value="NM_113456.4"/>
</dbReference>
<dbReference type="RefSeq" id="NP_850744.1">
    <molecule id="O82568-1"/>
    <property type="nucleotide sequence ID" value="NM_180413.2"/>
</dbReference>
<dbReference type="SMR" id="O82568"/>
<dbReference type="BioGRID" id="10843">
    <property type="interactions" value="3"/>
</dbReference>
<dbReference type="FunCoup" id="O82568">
    <property type="interactions" value="3485"/>
</dbReference>
<dbReference type="IntAct" id="O82568">
    <property type="interactions" value="3"/>
</dbReference>
<dbReference type="STRING" id="3702.O82568"/>
<dbReference type="GlyGen" id="O82568">
    <property type="glycosylation" value="1 site"/>
</dbReference>
<dbReference type="PaxDb" id="3702-AT3G25585.4"/>
<dbReference type="ProteomicsDB" id="245142">
    <molecule id="O82568-1"/>
</dbReference>
<dbReference type="EnsemblPlants" id="AT3G25585.1">
    <molecule id="O82568-1"/>
    <property type="protein sequence ID" value="AT3G25585.1"/>
    <property type="gene ID" value="AT3G25585"/>
</dbReference>
<dbReference type="EnsemblPlants" id="AT3G25585.2">
    <molecule id="O82568-1"/>
    <property type="protein sequence ID" value="AT3G25585.2"/>
    <property type="gene ID" value="AT3G25585"/>
</dbReference>
<dbReference type="EnsemblPlants" id="AT3G25585.4">
    <molecule id="O82568-1"/>
    <property type="protein sequence ID" value="AT3G25585.4"/>
    <property type="gene ID" value="AT3G25585"/>
</dbReference>
<dbReference type="GeneID" id="825529"/>
<dbReference type="Gramene" id="AT3G25585.1">
    <molecule id="O82568-1"/>
    <property type="protein sequence ID" value="AT3G25585.1"/>
    <property type="gene ID" value="AT3G25585"/>
</dbReference>
<dbReference type="Gramene" id="AT3G25585.2">
    <molecule id="O82568-1"/>
    <property type="protein sequence ID" value="AT3G25585.2"/>
    <property type="gene ID" value="AT3G25585"/>
</dbReference>
<dbReference type="Gramene" id="AT3G25585.4">
    <molecule id="O82568-1"/>
    <property type="protein sequence ID" value="AT3G25585.4"/>
    <property type="gene ID" value="AT3G25585"/>
</dbReference>
<dbReference type="KEGG" id="ath:AT3G25585"/>
<dbReference type="Araport" id="AT3G25585"/>
<dbReference type="TAIR" id="AT3G25585">
    <property type="gene designation" value="AAPT2"/>
</dbReference>
<dbReference type="eggNOG" id="KOG2877">
    <property type="taxonomic scope" value="Eukaryota"/>
</dbReference>
<dbReference type="HOGENOM" id="CLU_035066_0_1_1"/>
<dbReference type="InParanoid" id="O82568"/>
<dbReference type="OMA" id="QNMGQGW"/>
<dbReference type="OrthoDB" id="196717at2759"/>
<dbReference type="PhylomeDB" id="O82568"/>
<dbReference type="BioCyc" id="ARA:AT3G25585-MONOMER"/>
<dbReference type="BRENDA" id="2.7.8.1">
    <property type="organism ID" value="399"/>
</dbReference>
<dbReference type="UniPathway" id="UPA00558">
    <property type="reaction ID" value="UER00743"/>
</dbReference>
<dbReference type="UniPathway" id="UPA00753">
    <property type="reaction ID" value="UER00740"/>
</dbReference>
<dbReference type="PRO" id="PR:O82568"/>
<dbReference type="Proteomes" id="UP000006548">
    <property type="component" value="Chromosome 3"/>
</dbReference>
<dbReference type="ExpressionAtlas" id="O82568">
    <property type="expression patterns" value="baseline and differential"/>
</dbReference>
<dbReference type="GO" id="GO:0016020">
    <property type="term" value="C:membrane"/>
    <property type="evidence" value="ECO:0007669"/>
    <property type="project" value="UniProtKB-SubCell"/>
</dbReference>
<dbReference type="GO" id="GO:0004142">
    <property type="term" value="F:diacylglycerol cholinephosphotransferase activity"/>
    <property type="evidence" value="ECO:0007669"/>
    <property type="project" value="UniProtKB-EC"/>
</dbReference>
<dbReference type="GO" id="GO:0004307">
    <property type="term" value="F:ethanolaminephosphotransferase activity"/>
    <property type="evidence" value="ECO:0007669"/>
    <property type="project" value="UniProtKB-EC"/>
</dbReference>
<dbReference type="GO" id="GO:0046872">
    <property type="term" value="F:metal ion binding"/>
    <property type="evidence" value="ECO:0007669"/>
    <property type="project" value="UniProtKB-KW"/>
</dbReference>
<dbReference type="GO" id="GO:0006646">
    <property type="term" value="P:phosphatidylethanolamine biosynthetic process"/>
    <property type="evidence" value="ECO:0007669"/>
    <property type="project" value="UniProtKB-UniPathway"/>
</dbReference>
<dbReference type="FunFam" id="1.20.120.1760:FF:000014">
    <property type="entry name" value="Choline/ethanolaminephosphotransferase 1"/>
    <property type="match status" value="1"/>
</dbReference>
<dbReference type="Gene3D" id="1.20.120.1760">
    <property type="match status" value="1"/>
</dbReference>
<dbReference type="InterPro" id="IPR000462">
    <property type="entry name" value="CDP-OH_P_trans"/>
</dbReference>
<dbReference type="InterPro" id="IPR043130">
    <property type="entry name" value="CDP-OH_PTrfase_TM_dom"/>
</dbReference>
<dbReference type="InterPro" id="IPR048254">
    <property type="entry name" value="CDP_ALCOHOL_P_TRANSF_CS"/>
</dbReference>
<dbReference type="InterPro" id="IPR014472">
    <property type="entry name" value="CHOPT"/>
</dbReference>
<dbReference type="PANTHER" id="PTHR10414:SF69">
    <property type="entry name" value="CHOLINE_ETHANOLAMINEPHOSPHOTRANSFERASE 2"/>
    <property type="match status" value="1"/>
</dbReference>
<dbReference type="PANTHER" id="PTHR10414">
    <property type="entry name" value="ETHANOLAMINEPHOSPHOTRANSFERASE"/>
    <property type="match status" value="1"/>
</dbReference>
<dbReference type="Pfam" id="PF01066">
    <property type="entry name" value="CDP-OH_P_transf"/>
    <property type="match status" value="1"/>
</dbReference>
<dbReference type="PIRSF" id="PIRSF015665">
    <property type="entry name" value="CHOPT"/>
    <property type="match status" value="1"/>
</dbReference>
<dbReference type="PROSITE" id="PS00379">
    <property type="entry name" value="CDP_ALCOHOL_P_TRANSF"/>
    <property type="match status" value="1"/>
</dbReference>
<proteinExistence type="evidence at protein level"/>
<name>AAPT2_ARATH</name>
<evidence type="ECO:0000250" key="1"/>
<evidence type="ECO:0000255" key="2"/>
<evidence type="ECO:0000269" key="3">
    <source ref="1"/>
</evidence>
<evidence type="ECO:0000305" key="4"/>
<protein>
    <recommendedName>
        <fullName>Choline/ethanolaminephosphotransferase 2</fullName>
        <ecNumber>2.7.8.1</ecNumber>
        <ecNumber>2.7.8.2</ecNumber>
    </recommendedName>
    <alternativeName>
        <fullName>Aminoalcohol phosphotransferase 2</fullName>
        <shortName>AtAAPT2</shortName>
    </alternativeName>
</protein>
<accession>O82568</accession>
<gene>
    <name type="primary">AAPT2</name>
    <name type="ordered locus">At3g25585</name>
    <name type="ORF">MWL2</name>
    <name type="ORF">T5M7</name>
</gene>
<feature type="chain" id="PRO_0000423345" description="Choline/ethanolaminephosphotransferase 2">
    <location>
        <begin position="1"/>
        <end position="389"/>
    </location>
</feature>
<feature type="transmembrane region" description="Helical" evidence="2">
    <location>
        <begin position="49"/>
        <end position="69"/>
    </location>
</feature>
<feature type="transmembrane region" description="Helical" evidence="2">
    <location>
        <begin position="141"/>
        <end position="161"/>
    </location>
</feature>
<feature type="transmembrane region" description="Helical" evidence="2">
    <location>
        <begin position="176"/>
        <end position="196"/>
    </location>
</feature>
<feature type="transmembrane region" description="Helical" evidence="2">
    <location>
        <begin position="220"/>
        <end position="240"/>
    </location>
</feature>
<feature type="transmembrane region" description="Helical" evidence="2">
    <location>
        <begin position="252"/>
        <end position="272"/>
    </location>
</feature>
<feature type="transmembrane region" description="Helical" evidence="2">
    <location>
        <begin position="286"/>
        <end position="306"/>
    </location>
</feature>
<feature type="transmembrane region" description="Helical" evidence="2">
    <location>
        <begin position="321"/>
        <end position="338"/>
    </location>
</feature>
<feature type="transmembrane region" description="Helical" evidence="2">
    <location>
        <begin position="350"/>
        <end position="370"/>
    </location>
</feature>
<reference key="1">
    <citation type="journal article" date="1999" name="Plant Physiol. Biochem.">
        <title>Characterization of aminoalcoholphosphotransferases from Arabidopsis thaliana and soybean.</title>
        <authorList>
            <person name="Dewey R.E."/>
            <person name="Goode J.H."/>
        </authorList>
    </citation>
    <scope>NUCLEOTIDE SEQUENCE [MRNA]</scope>
    <scope>FUNCTION</scope>
    <scope>CATALYTIC ACTIVITY</scope>
</reference>
<reference key="2">
    <citation type="journal article" date="2000" name="DNA Res.">
        <title>Structural analysis of Arabidopsis thaliana chromosome 3. I. Sequence features of the regions of 4,504,864 bp covered by sixty P1 and TAC clones.</title>
        <authorList>
            <person name="Sato S."/>
            <person name="Nakamura Y."/>
            <person name="Kaneko T."/>
            <person name="Katoh T."/>
            <person name="Asamizu E."/>
            <person name="Tabata S."/>
        </authorList>
    </citation>
    <scope>NUCLEOTIDE SEQUENCE [LARGE SCALE GENOMIC DNA]</scope>
    <source>
        <strain>cv. Columbia</strain>
    </source>
</reference>
<reference key="3">
    <citation type="journal article" date="2000" name="DNA Res.">
        <title>Structural analysis of Arabidopsis thaliana chromosome 3. II. Sequence features of the 4,251,695 bp regions covered by 90 P1, TAC and BAC clones.</title>
        <authorList>
            <person name="Kaneko T."/>
            <person name="Katoh T."/>
            <person name="Sato S."/>
            <person name="Nakamura Y."/>
            <person name="Asamizu E."/>
            <person name="Tabata S."/>
        </authorList>
    </citation>
    <scope>NUCLEOTIDE SEQUENCE [LARGE SCALE GENOMIC DNA]</scope>
    <source>
        <strain>cv. Columbia</strain>
    </source>
</reference>
<reference key="4">
    <citation type="journal article" date="2017" name="Plant J.">
        <title>Araport11: a complete reannotation of the Arabidopsis thaliana reference genome.</title>
        <authorList>
            <person name="Cheng C.Y."/>
            <person name="Krishnakumar V."/>
            <person name="Chan A.P."/>
            <person name="Thibaud-Nissen F."/>
            <person name="Schobel S."/>
            <person name="Town C.D."/>
        </authorList>
    </citation>
    <scope>GENOME REANNOTATION</scope>
    <source>
        <strain>cv. Columbia</strain>
    </source>
</reference>
<reference key="5">
    <citation type="journal article" date="2003" name="Science">
        <title>Empirical analysis of transcriptional activity in the Arabidopsis genome.</title>
        <authorList>
            <person name="Yamada K."/>
            <person name="Lim J."/>
            <person name="Dale J.M."/>
            <person name="Chen H."/>
            <person name="Shinn P."/>
            <person name="Palm C.J."/>
            <person name="Southwick A.M."/>
            <person name="Wu H.C."/>
            <person name="Kim C.J."/>
            <person name="Nguyen M."/>
            <person name="Pham P.K."/>
            <person name="Cheuk R.F."/>
            <person name="Karlin-Newmann G."/>
            <person name="Liu S.X."/>
            <person name="Lam B."/>
            <person name="Sakano H."/>
            <person name="Wu T."/>
            <person name="Yu G."/>
            <person name="Miranda M."/>
            <person name="Quach H.L."/>
            <person name="Tripp M."/>
            <person name="Chang C.H."/>
            <person name="Lee J.M."/>
            <person name="Toriumi M.J."/>
            <person name="Chan M.M."/>
            <person name="Tang C.C."/>
            <person name="Onodera C.S."/>
            <person name="Deng J.M."/>
            <person name="Akiyama K."/>
            <person name="Ansari Y."/>
            <person name="Arakawa T."/>
            <person name="Banh J."/>
            <person name="Banno F."/>
            <person name="Bowser L."/>
            <person name="Brooks S.Y."/>
            <person name="Carninci P."/>
            <person name="Chao Q."/>
            <person name="Choy N."/>
            <person name="Enju A."/>
            <person name="Goldsmith A.D."/>
            <person name="Gurjal M."/>
            <person name="Hansen N.F."/>
            <person name="Hayashizaki Y."/>
            <person name="Johnson-Hopson C."/>
            <person name="Hsuan V.W."/>
            <person name="Iida K."/>
            <person name="Karnes M."/>
            <person name="Khan S."/>
            <person name="Koesema E."/>
            <person name="Ishida J."/>
            <person name="Jiang P.X."/>
            <person name="Jones T."/>
            <person name="Kawai J."/>
            <person name="Kamiya A."/>
            <person name="Meyers C."/>
            <person name="Nakajima M."/>
            <person name="Narusaka M."/>
            <person name="Seki M."/>
            <person name="Sakurai T."/>
            <person name="Satou M."/>
            <person name="Tamse R."/>
            <person name="Vaysberg M."/>
            <person name="Wallender E.K."/>
            <person name="Wong C."/>
            <person name="Yamamura Y."/>
            <person name="Yuan S."/>
            <person name="Shinozaki K."/>
            <person name="Davis R.W."/>
            <person name="Theologis A."/>
            <person name="Ecker J.R."/>
        </authorList>
    </citation>
    <scope>NUCLEOTIDE SEQUENCE [LARGE SCALE MRNA]</scope>
    <source>
        <strain>cv. Columbia</strain>
    </source>
</reference>
<comment type="function">
    <text evidence="3">Catalyzes both phosphatidylcholine and phosphatidylethanolamine biosynthesis from CDP-choline and CDP-ethanolamine, respectively. Has a higher cholinephosphotransferase activity than ethanolaminephosphotransferase activity.</text>
</comment>
<comment type="catalytic activity">
    <reaction evidence="3">
        <text>CDP-ethanolamine + a 1,2-diacyl-sn-glycerol = a 1,2-diacyl-sn-glycero-3-phosphoethanolamine + CMP + H(+)</text>
        <dbReference type="Rhea" id="RHEA:32943"/>
        <dbReference type="ChEBI" id="CHEBI:15378"/>
        <dbReference type="ChEBI" id="CHEBI:17815"/>
        <dbReference type="ChEBI" id="CHEBI:57876"/>
        <dbReference type="ChEBI" id="CHEBI:60377"/>
        <dbReference type="ChEBI" id="CHEBI:64612"/>
        <dbReference type="EC" id="2.7.8.1"/>
    </reaction>
</comment>
<comment type="catalytic activity">
    <reaction evidence="3">
        <text>CDP-choline + a 1,2-diacyl-sn-glycerol = a 1,2-diacyl-sn-glycero-3-phosphocholine + CMP + H(+)</text>
        <dbReference type="Rhea" id="RHEA:32939"/>
        <dbReference type="ChEBI" id="CHEBI:15378"/>
        <dbReference type="ChEBI" id="CHEBI:17815"/>
        <dbReference type="ChEBI" id="CHEBI:57643"/>
        <dbReference type="ChEBI" id="CHEBI:58779"/>
        <dbReference type="ChEBI" id="CHEBI:60377"/>
        <dbReference type="EC" id="2.7.8.2"/>
    </reaction>
</comment>
<comment type="cofactor">
    <cofactor evidence="1">
        <name>Mg(2+)</name>
        <dbReference type="ChEBI" id="CHEBI:18420"/>
    </cofactor>
    <cofactor evidence="1">
        <name>Mn(2+)</name>
        <dbReference type="ChEBI" id="CHEBI:29035"/>
    </cofactor>
</comment>
<comment type="pathway">
    <text>Phospholipid metabolism; phosphatidylethanolamine biosynthesis; phosphatidylethanolamine from ethanolamine: step 3/3.</text>
</comment>
<comment type="pathway">
    <text>Phospholipid metabolism; phosphatidylcholine biosynthesis; phosphatidylcholine from phosphocholine: step 2/2.</text>
</comment>
<comment type="subcellular location">
    <subcellularLocation>
        <location evidence="4">Membrane</location>
        <topology evidence="4">Multi-pass membrane protein</topology>
    </subcellularLocation>
</comment>
<comment type="alternative products">
    <event type="alternative splicing"/>
    <isoform>
        <id>O82568-1</id>
        <name>1</name>
        <sequence type="displayed"/>
    </isoform>
    <text>A number of isoforms are produced. According to EST sequences.</text>
</comment>
<comment type="similarity">
    <text evidence="4">Belongs to the CDP-alcohol phosphatidyltransferase class-I family.</text>
</comment>
<sequence length="389" mass="43639">MGYIGAHGVAALKKHKYSGVDHSYLAKYVLQPFWNRFVKIFPLWMPPNMITLMGFMFLLTSALLGYIYSPKLDSPPPRWVHFAHGLLLFLYQTFDAVDGKQARRTNSSSPLGELFDHGCDALGCALETMAYGSTAMCGRDTFWFWVISAVPFFGATWEHYFTNTLTLPVVNGPTEGLALIYCGHFFTAIVGAEWWAQPFGKSIPLFSWVPFLNEMQMSRIILFSMIFFAVIPTLAINTSNVYKVVHSRNGSMLLALAMLYPLVTLIAGVLIWDYLSPIDLIRNYPHLVVLGTGLAFGFLVGRMILAHLCDEPKGLKTNMCMSLLYLPFALANALTARLNDGVPLVDEFWVLLGYCIFTLSLYAHFATSVIHEITTALGIYCFRITRKEA</sequence>